<keyword id="KW-0027">Amidation</keyword>
<keyword id="KW-0903">Direct protein sequencing</keyword>
<keyword id="KW-0527">Neuropeptide</keyword>
<keyword id="KW-0964">Secreted</keyword>
<dbReference type="GO" id="GO:0005576">
    <property type="term" value="C:extracellular region"/>
    <property type="evidence" value="ECO:0007669"/>
    <property type="project" value="UniProtKB-SubCell"/>
</dbReference>
<dbReference type="GO" id="GO:0005184">
    <property type="term" value="F:neuropeptide hormone activity"/>
    <property type="evidence" value="ECO:0007669"/>
    <property type="project" value="InterPro"/>
</dbReference>
<dbReference type="GO" id="GO:0007218">
    <property type="term" value="P:neuropeptide signaling pathway"/>
    <property type="evidence" value="ECO:0007669"/>
    <property type="project" value="UniProtKB-KW"/>
</dbReference>
<dbReference type="InterPro" id="IPR001484">
    <property type="entry name" value="Pyrokinin_CS"/>
</dbReference>
<dbReference type="PROSITE" id="PS00539">
    <property type="entry name" value="PYROKININ"/>
    <property type="match status" value="1"/>
</dbReference>
<proteinExistence type="evidence at protein level"/>
<feature type="peptide" id="PRO_0000044365" description="Pyrokinin-6">
    <location>
        <begin position="1"/>
        <end position="14"/>
    </location>
</feature>
<feature type="modified residue" description="Leucine amide" evidence="3">
    <location>
        <position position="14"/>
    </location>
</feature>
<sequence length="14" mass="1588">SDPEVPGMWFGPRL</sequence>
<accession>P84366</accession>
<evidence type="ECO:0000250" key="1">
    <source>
        <dbReference type="UniProtKB" id="P82693"/>
    </source>
</evidence>
<evidence type="ECO:0000255" key="2"/>
<evidence type="ECO:0000269" key="3">
    <source>
    </source>
</evidence>
<evidence type="ECO:0000269" key="4">
    <source ref="2"/>
</evidence>
<evidence type="ECO:0000305" key="5"/>
<comment type="function">
    <text evidence="1">Myoactive.</text>
</comment>
<comment type="subcellular location">
    <subcellularLocation>
        <location evidence="4">Secreted</location>
    </subcellularLocation>
</comment>
<comment type="tissue specificity">
    <text evidence="4">Expressed in the brain, subesophageal ganglion and in the retrocerebral complex (mainly corpora cardiaca).</text>
</comment>
<comment type="mass spectrometry" mass="1586.8" method="MALDI" evidence="3"/>
<comment type="similarity">
    <text evidence="2">Belongs to the pyrokinin family.</text>
</comment>
<reference evidence="5" key="1">
    <citation type="journal article" date="2005" name="Peptides">
        <title>Peptidomics of neurohemal organs from species of the cockroach family Blattidae: how do neuropeptides of closely related species differ?</title>
        <authorList>
            <person name="Predel R."/>
            <person name="Gaede G."/>
        </authorList>
    </citation>
    <scope>PROTEIN SEQUENCE</scope>
    <scope>MASS SPECTROMETRY</scope>
    <scope>AMIDATION AT LEU-14</scope>
    <source>
        <tissue evidence="3">Corpora allata</tissue>
    </source>
</reference>
<reference evidence="5" key="2">
    <citation type="submission" date="2004-11" db="UniProtKB">
        <authorList>
            <person name="Predel R."/>
            <person name="Gaede G."/>
        </authorList>
    </citation>
    <scope>SUBCELLULAR LOCATION</scope>
    <scope>TISSUE SPECIFICITY</scope>
</reference>
<organism>
    <name type="scientific">Pseudoderopeltis flavescens</name>
    <name type="common">Cockroach</name>
    <dbReference type="NCBI Taxonomy" id="303916"/>
    <lineage>
        <taxon>Eukaryota</taxon>
        <taxon>Metazoa</taxon>
        <taxon>Ecdysozoa</taxon>
        <taxon>Arthropoda</taxon>
        <taxon>Hexapoda</taxon>
        <taxon>Insecta</taxon>
        <taxon>Pterygota</taxon>
        <taxon>Neoptera</taxon>
        <taxon>Polyneoptera</taxon>
        <taxon>Dictyoptera</taxon>
        <taxon>Blattodea</taxon>
        <taxon>Blattoidea</taxon>
        <taxon>Blattidae</taxon>
        <taxon>Blattinae</taxon>
        <taxon>Pseudoderopeltis</taxon>
    </lineage>
</organism>
<protein>
    <recommendedName>
        <fullName>Pyrokinin-6</fullName>
    </recommendedName>
    <alternativeName>
        <fullName>FXPRL-amide</fullName>
    </alternativeName>
</protein>
<name>PPK6_PSEFV</name>